<protein>
    <recommendedName>
        <fullName evidence="1">L-threonine 3-dehydrogenase</fullName>
        <shortName evidence="1">TDH</shortName>
        <ecNumber evidence="1">1.1.1.103</ecNumber>
    </recommendedName>
</protein>
<comment type="function">
    <text evidence="1">Catalyzes the NAD(+)-dependent oxidation of L-threonine to 2-amino-3-ketobutyrate.</text>
</comment>
<comment type="catalytic activity">
    <reaction evidence="1">
        <text>L-threonine + NAD(+) = (2S)-2-amino-3-oxobutanoate + NADH + H(+)</text>
        <dbReference type="Rhea" id="RHEA:13161"/>
        <dbReference type="ChEBI" id="CHEBI:15378"/>
        <dbReference type="ChEBI" id="CHEBI:57540"/>
        <dbReference type="ChEBI" id="CHEBI:57926"/>
        <dbReference type="ChEBI" id="CHEBI:57945"/>
        <dbReference type="ChEBI" id="CHEBI:78948"/>
        <dbReference type="EC" id="1.1.1.103"/>
    </reaction>
</comment>
<comment type="cofactor">
    <cofactor evidence="1">
        <name>Zn(2+)</name>
        <dbReference type="ChEBI" id="CHEBI:29105"/>
    </cofactor>
    <text evidence="1">Binds 2 Zn(2+) ions per subunit.</text>
</comment>
<comment type="pathway">
    <text evidence="1">Amino-acid degradation; L-threonine degradation via oxydo-reductase pathway; glycine from L-threonine: step 1/2.</text>
</comment>
<comment type="subunit">
    <text evidence="1">Homotetramer.</text>
</comment>
<comment type="subcellular location">
    <subcellularLocation>
        <location evidence="1">Cytoplasm</location>
    </subcellularLocation>
</comment>
<comment type="similarity">
    <text evidence="1">Belongs to the zinc-containing alcohol dehydrogenase family.</text>
</comment>
<proteinExistence type="inferred from homology"/>
<sequence length="351" mass="38050">MAETMRALRKLEAGPGATLQEVPIPTIGPRDVLVKVRAASICGTDYHIYTWDPWSAGRVKPPLTIGHELAGEVVAVGREVTACKVGDYVSAETHIVCNRCPRCHMGEYHLCENTKILGVDTDGAFAEYVAVPEQNIWVNDKDIPFELQSIQEPLGNAVHTALNGDLTARSVLITGCGPIGIMSVPVAKMAGAEIVMAMDINEYRLQLAGQLGADVLINPTKQDPVEVVRSYTRGYGADVVLEMSGNPTAIRQGLKAARNGARISLLGLPGRPLELDLAADVIMRGLVLQGITGRRMWQTWYQVRSLYRAGLAERLRPLVTHRMPLEQIDAAMELMGSGQSGKIVLVPDLKA</sequence>
<gene>
    <name evidence="1" type="primary">tdh</name>
    <name type="ordered locus">STH1873</name>
</gene>
<evidence type="ECO:0000255" key="1">
    <source>
        <dbReference type="HAMAP-Rule" id="MF_00627"/>
    </source>
</evidence>
<feature type="chain" id="PRO_0000160861" description="L-threonine 3-dehydrogenase">
    <location>
        <begin position="1"/>
        <end position="351"/>
    </location>
</feature>
<feature type="active site" description="Charge relay system" evidence="1">
    <location>
        <position position="44"/>
    </location>
</feature>
<feature type="active site" description="Charge relay system" evidence="1">
    <location>
        <position position="47"/>
    </location>
</feature>
<feature type="binding site" evidence="1">
    <location>
        <position position="42"/>
    </location>
    <ligand>
        <name>Zn(2+)</name>
        <dbReference type="ChEBI" id="CHEBI:29105"/>
        <label>1</label>
        <note>catalytic</note>
    </ligand>
</feature>
<feature type="binding site" evidence="1">
    <location>
        <position position="67"/>
    </location>
    <ligand>
        <name>Zn(2+)</name>
        <dbReference type="ChEBI" id="CHEBI:29105"/>
        <label>1</label>
        <note>catalytic</note>
    </ligand>
</feature>
<feature type="binding site" evidence="1">
    <location>
        <position position="68"/>
    </location>
    <ligand>
        <name>Zn(2+)</name>
        <dbReference type="ChEBI" id="CHEBI:29105"/>
        <label>1</label>
        <note>catalytic</note>
    </ligand>
</feature>
<feature type="binding site" evidence="1">
    <location>
        <position position="97"/>
    </location>
    <ligand>
        <name>Zn(2+)</name>
        <dbReference type="ChEBI" id="CHEBI:29105"/>
        <label>2</label>
    </ligand>
</feature>
<feature type="binding site" evidence="1">
    <location>
        <position position="100"/>
    </location>
    <ligand>
        <name>Zn(2+)</name>
        <dbReference type="ChEBI" id="CHEBI:29105"/>
        <label>2</label>
    </ligand>
</feature>
<feature type="binding site" evidence="1">
    <location>
        <position position="103"/>
    </location>
    <ligand>
        <name>Zn(2+)</name>
        <dbReference type="ChEBI" id="CHEBI:29105"/>
        <label>2</label>
    </ligand>
</feature>
<feature type="binding site" evidence="1">
    <location>
        <position position="111"/>
    </location>
    <ligand>
        <name>Zn(2+)</name>
        <dbReference type="ChEBI" id="CHEBI:29105"/>
        <label>2</label>
    </ligand>
</feature>
<feature type="binding site" evidence="1">
    <location>
        <position position="179"/>
    </location>
    <ligand>
        <name>NAD(+)</name>
        <dbReference type="ChEBI" id="CHEBI:57540"/>
    </ligand>
</feature>
<feature type="binding site" evidence="1">
    <location>
        <position position="199"/>
    </location>
    <ligand>
        <name>NAD(+)</name>
        <dbReference type="ChEBI" id="CHEBI:57540"/>
    </ligand>
</feature>
<feature type="binding site" evidence="1">
    <location>
        <position position="204"/>
    </location>
    <ligand>
        <name>NAD(+)</name>
        <dbReference type="ChEBI" id="CHEBI:57540"/>
    </ligand>
</feature>
<feature type="binding site" evidence="1">
    <location>
        <begin position="266"/>
        <end position="268"/>
    </location>
    <ligand>
        <name>NAD(+)</name>
        <dbReference type="ChEBI" id="CHEBI:57540"/>
    </ligand>
</feature>
<feature type="binding site" evidence="1">
    <location>
        <begin position="291"/>
        <end position="292"/>
    </location>
    <ligand>
        <name>NAD(+)</name>
        <dbReference type="ChEBI" id="CHEBI:57540"/>
    </ligand>
</feature>
<feature type="site" description="Important for catalytic activity for the proton relay mechanism but does not participate directly in the coordination of zinc atom" evidence="1">
    <location>
        <position position="152"/>
    </location>
</feature>
<accession>Q67N85</accession>
<keyword id="KW-0963">Cytoplasm</keyword>
<keyword id="KW-0479">Metal-binding</keyword>
<keyword id="KW-0520">NAD</keyword>
<keyword id="KW-0560">Oxidoreductase</keyword>
<keyword id="KW-1185">Reference proteome</keyword>
<keyword id="KW-0862">Zinc</keyword>
<organism>
    <name type="scientific">Symbiobacterium thermophilum (strain DSM 24528 / JCM 14929 / IAM 14863 / T)</name>
    <dbReference type="NCBI Taxonomy" id="292459"/>
    <lineage>
        <taxon>Bacteria</taxon>
        <taxon>Bacillati</taxon>
        <taxon>Bacillota</taxon>
        <taxon>Clostridia</taxon>
        <taxon>Eubacteriales</taxon>
        <taxon>Symbiobacteriaceae</taxon>
        <taxon>Symbiobacterium</taxon>
    </lineage>
</organism>
<reference key="1">
    <citation type="journal article" date="2004" name="Nucleic Acids Res.">
        <title>Genome sequence of Symbiobacterium thermophilum, an uncultivable bacterium that depends on microbial commensalism.</title>
        <authorList>
            <person name="Ueda K."/>
            <person name="Yamashita A."/>
            <person name="Ishikawa J."/>
            <person name="Shimada M."/>
            <person name="Watsuji T."/>
            <person name="Morimura K."/>
            <person name="Ikeda H."/>
            <person name="Hattori M."/>
            <person name="Beppu T."/>
        </authorList>
    </citation>
    <scope>NUCLEOTIDE SEQUENCE [LARGE SCALE GENOMIC DNA]</scope>
    <source>
        <strain>DSM 24528 / JCM 14929 / IAM 14863 / T</strain>
    </source>
</reference>
<name>TDH_SYMTH</name>
<dbReference type="EC" id="1.1.1.103" evidence="1"/>
<dbReference type="EMBL" id="AP006840">
    <property type="protein sequence ID" value="BAD40858.1"/>
    <property type="molecule type" value="Genomic_DNA"/>
</dbReference>
<dbReference type="RefSeq" id="WP_011196000.1">
    <property type="nucleotide sequence ID" value="NC_006177.1"/>
</dbReference>
<dbReference type="SMR" id="Q67N85"/>
<dbReference type="STRING" id="292459.STH1873"/>
<dbReference type="KEGG" id="sth:STH1873"/>
<dbReference type="eggNOG" id="COG1063">
    <property type="taxonomic scope" value="Bacteria"/>
</dbReference>
<dbReference type="HOGENOM" id="CLU_026673_11_0_9"/>
<dbReference type="UniPathway" id="UPA00046">
    <property type="reaction ID" value="UER00505"/>
</dbReference>
<dbReference type="Proteomes" id="UP000000417">
    <property type="component" value="Chromosome"/>
</dbReference>
<dbReference type="GO" id="GO:0005737">
    <property type="term" value="C:cytoplasm"/>
    <property type="evidence" value="ECO:0007669"/>
    <property type="project" value="UniProtKB-SubCell"/>
</dbReference>
<dbReference type="GO" id="GO:0008743">
    <property type="term" value="F:L-threonine 3-dehydrogenase activity"/>
    <property type="evidence" value="ECO:0007669"/>
    <property type="project" value="UniProtKB-UniRule"/>
</dbReference>
<dbReference type="GO" id="GO:0008270">
    <property type="term" value="F:zinc ion binding"/>
    <property type="evidence" value="ECO:0007669"/>
    <property type="project" value="UniProtKB-UniRule"/>
</dbReference>
<dbReference type="GO" id="GO:0019518">
    <property type="term" value="P:L-threonine catabolic process to glycine"/>
    <property type="evidence" value="ECO:0007669"/>
    <property type="project" value="UniProtKB-UniPathway"/>
</dbReference>
<dbReference type="CDD" id="cd05281">
    <property type="entry name" value="TDH"/>
    <property type="match status" value="1"/>
</dbReference>
<dbReference type="Gene3D" id="3.90.180.10">
    <property type="entry name" value="Medium-chain alcohol dehydrogenases, catalytic domain"/>
    <property type="match status" value="1"/>
</dbReference>
<dbReference type="Gene3D" id="3.40.50.720">
    <property type="entry name" value="NAD(P)-binding Rossmann-like Domain"/>
    <property type="match status" value="1"/>
</dbReference>
<dbReference type="HAMAP" id="MF_00627">
    <property type="entry name" value="Thr_dehydrog"/>
    <property type="match status" value="1"/>
</dbReference>
<dbReference type="InterPro" id="IPR013149">
    <property type="entry name" value="ADH-like_C"/>
</dbReference>
<dbReference type="InterPro" id="IPR013154">
    <property type="entry name" value="ADH-like_N"/>
</dbReference>
<dbReference type="InterPro" id="IPR002328">
    <property type="entry name" value="ADH_Zn_CS"/>
</dbReference>
<dbReference type="InterPro" id="IPR011032">
    <property type="entry name" value="GroES-like_sf"/>
</dbReference>
<dbReference type="InterPro" id="IPR004627">
    <property type="entry name" value="L-Threonine_3-DHase"/>
</dbReference>
<dbReference type="InterPro" id="IPR036291">
    <property type="entry name" value="NAD(P)-bd_dom_sf"/>
</dbReference>
<dbReference type="InterPro" id="IPR020843">
    <property type="entry name" value="PKS_ER"/>
</dbReference>
<dbReference type="InterPro" id="IPR050129">
    <property type="entry name" value="Zn_alcohol_dh"/>
</dbReference>
<dbReference type="NCBIfam" id="NF003808">
    <property type="entry name" value="PRK05396.1"/>
    <property type="match status" value="1"/>
</dbReference>
<dbReference type="NCBIfam" id="TIGR00692">
    <property type="entry name" value="tdh"/>
    <property type="match status" value="1"/>
</dbReference>
<dbReference type="PANTHER" id="PTHR43401">
    <property type="entry name" value="L-THREONINE 3-DEHYDROGENASE"/>
    <property type="match status" value="1"/>
</dbReference>
<dbReference type="PANTHER" id="PTHR43401:SF2">
    <property type="entry name" value="L-THREONINE 3-DEHYDROGENASE"/>
    <property type="match status" value="1"/>
</dbReference>
<dbReference type="Pfam" id="PF08240">
    <property type="entry name" value="ADH_N"/>
    <property type="match status" value="1"/>
</dbReference>
<dbReference type="Pfam" id="PF00107">
    <property type="entry name" value="ADH_zinc_N"/>
    <property type="match status" value="1"/>
</dbReference>
<dbReference type="SMART" id="SM00829">
    <property type="entry name" value="PKS_ER"/>
    <property type="match status" value="1"/>
</dbReference>
<dbReference type="SUPFAM" id="SSF50129">
    <property type="entry name" value="GroES-like"/>
    <property type="match status" value="1"/>
</dbReference>
<dbReference type="SUPFAM" id="SSF51735">
    <property type="entry name" value="NAD(P)-binding Rossmann-fold domains"/>
    <property type="match status" value="1"/>
</dbReference>
<dbReference type="PROSITE" id="PS00059">
    <property type="entry name" value="ADH_ZINC"/>
    <property type="match status" value="1"/>
</dbReference>